<gene>
    <name evidence="1" type="primary">lpp</name>
</gene>
<feature type="signal peptide" evidence="1">
    <location>
        <begin position="1"/>
        <end position="19"/>
    </location>
</feature>
<feature type="chain" id="PRO_0000018338" description="Major outer membrane lipoprotein Lpp" evidence="1">
    <location>
        <begin position="20"/>
        <end position="78"/>
    </location>
</feature>
<feature type="repeat" evidence="1">
    <location>
        <begin position="25"/>
        <end position="35"/>
    </location>
</feature>
<feature type="repeat" evidence="1">
    <location>
        <begin position="39"/>
        <end position="49"/>
    </location>
</feature>
<feature type="coiled-coil region" evidence="1">
    <location>
        <begin position="28"/>
        <end position="62"/>
    </location>
</feature>
<feature type="modified residue" description="N6-murein peptidoglycan lysine" evidence="1">
    <location>
        <position position="78"/>
    </location>
</feature>
<feature type="lipid moiety-binding region" description="N-palmitoyl cysteine" evidence="1">
    <location>
        <position position="20"/>
    </location>
</feature>
<feature type="lipid moiety-binding region" description="S-diacylglycerol cysteine" evidence="1">
    <location>
        <position position="20"/>
    </location>
</feature>
<comment type="function">
    <text evidence="1">A highly abundant outer membrane lipoprotein that controls the distance between the inner and outer membranes. The only protein known to be covalently linked to the peptidoglycan network (PGN). Also non-covalently binds the PGN. The link between the cell outer membrane and PGN contributes to maintenance of the structural and functional integrity of the cell envelope, and maintains the correct distance between the PGN and the outer membrane.</text>
</comment>
<comment type="subunit">
    <text evidence="1">Homotrimer.</text>
</comment>
<comment type="subcellular location">
    <subcellularLocation>
        <location evidence="1">Cell outer membrane</location>
        <topology evidence="1">Lipid-anchor</topology>
        <orientation evidence="1">Periplasmic side</orientation>
    </subcellularLocation>
    <subcellularLocation>
        <location evidence="1">Secreted</location>
        <location evidence="1">Cell wall</location>
        <topology evidence="1">Peptidoglycan-anchor</topology>
    </subcellularLocation>
    <text evidence="1">Attached via its lipidated N-terminus to the inner leaflet of the outer membrane. Attached to the peptidoglycan network (PGN) via its C-terminus.</text>
</comment>
<comment type="similarity">
    <text evidence="1">Belongs to the Lpp family.</text>
</comment>
<organism>
    <name type="scientific">Proteus mirabilis</name>
    <dbReference type="NCBI Taxonomy" id="584"/>
    <lineage>
        <taxon>Bacteria</taxon>
        <taxon>Pseudomonadati</taxon>
        <taxon>Pseudomonadota</taxon>
        <taxon>Gammaproteobacteria</taxon>
        <taxon>Enterobacterales</taxon>
        <taxon>Morganellaceae</taxon>
        <taxon>Proteus</taxon>
    </lineage>
</organism>
<reference key="1">
    <citation type="journal article" date="1986" name="J. Biol. Chem.">
        <title>Expression of the Proteus mirabilis lipoprotein gene in Escherichia coli. Existence of tandem promoters.</title>
        <authorList>
            <person name="Ching G."/>
            <person name="Inouye M."/>
        </authorList>
    </citation>
    <scope>NUCLEOTIDE SEQUENCE [GENOMIC DNA]</scope>
</reference>
<reference key="2">
    <citation type="journal article" date="1985" name="J. Mol. Biol.">
        <title>Evolution of the lipoprotein gene in the enterobacteriaceae. Cloning and DNA sequence of the lpp gene from Proteus mirabilis.</title>
        <authorList>
            <person name="Ching G."/>
            <person name="Inouye M."/>
        </authorList>
    </citation>
    <scope>NUCLEOTIDE SEQUENCE [GENOMIC DNA]</scope>
</reference>
<keyword id="KW-0998">Cell outer membrane</keyword>
<keyword id="KW-0134">Cell wall</keyword>
<keyword id="KW-0175">Coiled coil</keyword>
<keyword id="KW-0449">Lipoprotein</keyword>
<keyword id="KW-0472">Membrane</keyword>
<keyword id="KW-0564">Palmitate</keyword>
<keyword id="KW-0572">Peptidoglycan-anchor</keyword>
<keyword id="KW-0677">Repeat</keyword>
<keyword id="KW-0964">Secreted</keyword>
<keyword id="KW-0732">Signal</keyword>
<accession>P09461</accession>
<dbReference type="EMBL" id="M13176">
    <property type="protein sequence ID" value="AAA25658.1"/>
    <property type="molecule type" value="Genomic_DNA"/>
</dbReference>
<dbReference type="EMBL" id="M28554">
    <property type="protein sequence ID" value="AAA25659.1"/>
    <property type="molecule type" value="Genomic_DNA"/>
</dbReference>
<dbReference type="PIR" id="A24352">
    <property type="entry name" value="A24352"/>
</dbReference>
<dbReference type="SMR" id="P09461"/>
<dbReference type="STRING" id="584.AOUC001_08535"/>
<dbReference type="GO" id="GO:0009279">
    <property type="term" value="C:cell outer membrane"/>
    <property type="evidence" value="ECO:0007669"/>
    <property type="project" value="UniProtKB-SubCell"/>
</dbReference>
<dbReference type="GO" id="GO:0005576">
    <property type="term" value="C:extracellular region"/>
    <property type="evidence" value="ECO:0007669"/>
    <property type="project" value="UniProtKB-KW"/>
</dbReference>
<dbReference type="GO" id="GO:0008289">
    <property type="term" value="F:lipid binding"/>
    <property type="evidence" value="ECO:0007669"/>
    <property type="project" value="UniProtKB-UniRule"/>
</dbReference>
<dbReference type="GO" id="GO:0042834">
    <property type="term" value="F:peptidoglycan binding"/>
    <property type="evidence" value="ECO:0007669"/>
    <property type="project" value="UniProtKB-UniRule"/>
</dbReference>
<dbReference type="GO" id="GO:0030258">
    <property type="term" value="P:lipid modification"/>
    <property type="evidence" value="ECO:0007669"/>
    <property type="project" value="UniProtKB-UniRule"/>
</dbReference>
<dbReference type="GO" id="GO:0043580">
    <property type="term" value="P:periplasmic space organization"/>
    <property type="evidence" value="ECO:0007669"/>
    <property type="project" value="UniProtKB-UniRule"/>
</dbReference>
<dbReference type="Gene3D" id="1.20.5.190">
    <property type="match status" value="1"/>
</dbReference>
<dbReference type="HAMAP" id="MF_00843">
    <property type="entry name" value="Lpp"/>
    <property type="match status" value="1"/>
</dbReference>
<dbReference type="InterPro" id="IPR006817">
    <property type="entry name" value="Lipoprotein_leucine-zipper_dom"/>
</dbReference>
<dbReference type="InterPro" id="IPR016367">
    <property type="entry name" value="MOM_Lpp"/>
</dbReference>
<dbReference type="NCBIfam" id="NF040598">
    <property type="entry name" value="Ala_zip_lipo"/>
    <property type="match status" value="1"/>
</dbReference>
<dbReference type="PANTHER" id="PTHR38763:SF1">
    <property type="entry name" value="MAJOR OUTER MEMBRANE LIPOPROTEIN LPP"/>
    <property type="match status" value="1"/>
</dbReference>
<dbReference type="PANTHER" id="PTHR38763">
    <property type="entry name" value="MAJOR OUTER MEMBRANE PROLIPOPROTEIN LPP"/>
    <property type="match status" value="1"/>
</dbReference>
<dbReference type="Pfam" id="PF04728">
    <property type="entry name" value="LPP"/>
    <property type="match status" value="1"/>
</dbReference>
<dbReference type="PIRSF" id="PIRSF002855">
    <property type="entry name" value="Murein-lipoprotein"/>
    <property type="match status" value="1"/>
</dbReference>
<dbReference type="SUPFAM" id="SSF58042">
    <property type="entry name" value="Outer membrane lipoprotein"/>
    <property type="match status" value="1"/>
</dbReference>
<dbReference type="PROSITE" id="PS51257">
    <property type="entry name" value="PROKAR_LIPOPROTEIN"/>
    <property type="match status" value="1"/>
</dbReference>
<evidence type="ECO:0000255" key="1">
    <source>
        <dbReference type="HAMAP-Rule" id="MF_00843"/>
    </source>
</evidence>
<sequence length="78" mass="8251">MKAKIVLGAVILASGLLAGCSSSNNAQLDQISSDVNRLNTQVQQLSSDVQSANAQAKAAYEAARANQRLDNQVTTYKK</sequence>
<protein>
    <recommendedName>
        <fullName evidence="1">Major outer membrane lipoprotein Lpp</fullName>
    </recommendedName>
</protein>
<proteinExistence type="inferred from homology"/>
<name>LPP_PROMI</name>